<organism>
    <name type="scientific">Isodontia harmandi</name>
    <name type="common">Grass-carrying wasp</name>
    <dbReference type="NCBI Taxonomy" id="2838365"/>
    <lineage>
        <taxon>Eukaryota</taxon>
        <taxon>Metazoa</taxon>
        <taxon>Ecdysozoa</taxon>
        <taxon>Arthropoda</taxon>
        <taxon>Hexapoda</taxon>
        <taxon>Insecta</taxon>
        <taxon>Pterygota</taxon>
        <taxon>Neoptera</taxon>
        <taxon>Endopterygota</taxon>
        <taxon>Hymenoptera</taxon>
        <taxon>Apocrita</taxon>
        <taxon>Aculeata</taxon>
        <taxon>Apoidea</taxon>
        <taxon>Sphecidae</taxon>
        <taxon>Sphecinae</taxon>
        <taxon>Sphecina</taxon>
        <taxon>Isodontia</taxon>
    </lineage>
</organism>
<reference key="1">
    <citation type="journal article" date="2019" name="Toxins">
        <title>Sa12b peptide from solitary wasp inhibits ASIC currents in rat dorsal root ganglion neurons.</title>
        <authorList>
            <person name="Hernandez C."/>
            <person name="Konno K."/>
            <person name="Salceda E."/>
            <person name="Vega R."/>
            <person name="Zaharenko A.J."/>
            <person name="Soto E."/>
        </authorList>
    </citation>
    <scope>PROTEIN SEQUENCE OF 2-10</scope>
    <scope>IDENTIFICATION BY MASS SPECTROMETRY</scope>
    <scope>SUBCELLULAR LOCATION</scope>
    <scope>FUNCTION</scope>
    <scope>SYNTHESIS</scope>
    <scope>AMIDATION AT PHE-10</scope>
    <source>
        <tissue>Venom</tissue>
    </source>
</reference>
<reference key="2">
    <citation type="journal article" date="2012" name="Toxicon">
        <title>96. Chemical and biological characterization of a novel neuropeptide in the venom of solitary digger wasp.</title>
        <authorList>
            <person name="Nihei K.-I."/>
            <person name="Kazuma K."/>
            <person name="Ando K."/>
            <person name="Konno K."/>
        </authorList>
    </citation>
    <scope>PROTEIN SEQUENCE</scope>
    <scope>SUBCELLULAR LOCATION</scope>
    <scope>IDENTIFICATION BY MASS SPECTROMETRY</scope>
    <scope>FUNCTION</scope>
    <scope>AMIDATION AT PHE-10</scope>
</reference>
<reference key="3">
    <citation type="journal article" date="2021" name="Peptides">
        <title>Isolation and characterization of FMRFamide-like peptides in the venoms of solitary sphecid wasps.</title>
        <authorList>
            <person name="Nihei K.I."/>
            <person name="Peigneur S."/>
            <person name="Tytgat J."/>
            <person name="Lange A.B."/>
            <person name="Konno K."/>
        </authorList>
    </citation>
    <scope>PROTEIN SEQUENCE</scope>
    <scope>SUBCELLULAR LOCATION</scope>
    <scope>PARTIAL AMIDATION AT PHE-10</scope>
    <source>
        <tissue>Venom</tissue>
    </source>
</reference>
<reference key="4">
    <citation type="journal article" date="2016" name="Toxins">
        <title>Peptide toxins in solitary wasp venoms.</title>
        <authorList>
            <person name="Konno K."/>
            <person name="Kazuma K."/>
            <person name="Nihei K."/>
        </authorList>
    </citation>
    <scope>REVIEW</scope>
</reference>
<comment type="function">
    <molecule>FMRFamide-like peptide Sh5a</molecule>
    <text evidence="3 9">May be directly involved in a paralyzing effect, by inhibiting muscle contraction, or may also act centrally to modulate prey behaviors (Probable). Inhibits both the frequency and amplitude of spontaneous contractions of the locust oviducts (tested at 50 nM) (Ref.2).</text>
</comment>
<comment type="function">
    <molecule>FMRFamide-like peptide Sh5b</molecule>
    <text evidence="1 9">Does not produce consistent and reproducible effects on ASIC currents (PubMed:31658776). Inhibits spontaneous oviduct contractions to the same extent as that of SchistoFLRFamide (Probable).</text>
</comment>
<comment type="subcellular location">
    <subcellularLocation>
        <location evidence="1 2 3">Secreted</location>
    </subcellularLocation>
</comment>
<comment type="tissue specificity">
    <text evidence="8 9 10">Expressed by the venom gland.</text>
</comment>
<comment type="PTM">
    <text evidence="1">Both the long peptide (Sh5a) and the short peptide (Sh5b) (residue 2-10) are amidated.</text>
</comment>
<comment type="mass spectrometry" mass="1274.6" method="MALDI" evidence="2">
    <text>Sh5a, Monoisotopic mass.</text>
</comment>
<comment type="mass spectrometry" mass="1145.6" method="MALDI" evidence="2">
    <text>Sh5b, Monoisotopic mass.</text>
</comment>
<comment type="similarity">
    <text evidence="7">Belongs to the FARP (FMRFamide related peptide) family.</text>
</comment>
<proteinExistence type="evidence at protein level"/>
<sequence length="10" mass="1276">EDVDHVFLRF</sequence>
<protein>
    <recommendedName>
        <fullName evidence="6">FMRFamide-like peptide Sh5a</fullName>
    </recommendedName>
    <alternativeName>
        <fullName evidence="4">FMRFamide-like peptide Sa-112</fullName>
        <shortName evidence="6">Sa112</shortName>
    </alternativeName>
    <component>
        <recommendedName>
            <fullName evidence="5">FMRFamide-like peptide Sh5b</fullName>
        </recommendedName>
    </component>
</protein>
<dbReference type="GO" id="GO:0005576">
    <property type="term" value="C:extracellular region"/>
    <property type="evidence" value="ECO:0007669"/>
    <property type="project" value="UniProtKB-SubCell"/>
</dbReference>
<dbReference type="GO" id="GO:0090729">
    <property type="term" value="F:toxin activity"/>
    <property type="evidence" value="ECO:0007669"/>
    <property type="project" value="UniProtKB-KW"/>
</dbReference>
<feature type="peptide" id="PRO_0000453657" description="FMRFamide-like peptide Sh5a" evidence="3">
    <location>
        <begin position="1"/>
        <end position="10"/>
    </location>
</feature>
<feature type="peptide" id="PRO_0000453658" description="FMRFamide-like peptide Sh5b" evidence="1">
    <location>
        <begin position="2"/>
        <end position="10"/>
    </location>
</feature>
<feature type="modified residue" description="Phenylalanine amide" evidence="1">
    <location>
        <position position="10"/>
    </location>
</feature>
<keyword id="KW-0027">Amidation</keyword>
<keyword id="KW-0903">Direct protein sequencing</keyword>
<keyword id="KW-0528">Neurotoxin</keyword>
<keyword id="KW-0964">Secreted</keyword>
<keyword id="KW-0800">Toxin</keyword>
<name>FLP5_ISOHA</name>
<accession>P0DUV2</accession>
<evidence type="ECO:0000269" key="1">
    <source>
    </source>
</evidence>
<evidence type="ECO:0000269" key="2">
    <source>
    </source>
</evidence>
<evidence type="ECO:0000269" key="3">
    <source ref="2"/>
</evidence>
<evidence type="ECO:0000303" key="4">
    <source>
    </source>
</evidence>
<evidence type="ECO:0000303" key="5">
    <source>
    </source>
</evidence>
<evidence type="ECO:0000303" key="6">
    <source>
    </source>
</evidence>
<evidence type="ECO:0000305" key="7"/>
<evidence type="ECO:0000305" key="8">
    <source>
    </source>
</evidence>
<evidence type="ECO:0000305" key="9">
    <source>
    </source>
</evidence>
<evidence type="ECO:0000305" key="10">
    <source ref="2"/>
</evidence>